<name>U1131_ARATH</name>
<accession>Q9CAE4</accession>
<accession>Q0WQK5</accession>
<reference key="1">
    <citation type="journal article" date="2000" name="Nature">
        <title>Sequence and analysis of chromosome 3 of the plant Arabidopsis thaliana.</title>
        <authorList>
            <person name="Salanoubat M."/>
            <person name="Lemcke K."/>
            <person name="Rieger M."/>
            <person name="Ansorge W."/>
            <person name="Unseld M."/>
            <person name="Fartmann B."/>
            <person name="Valle G."/>
            <person name="Bloecker H."/>
            <person name="Perez-Alonso M."/>
            <person name="Obermaier B."/>
            <person name="Delseny M."/>
            <person name="Boutry M."/>
            <person name="Grivell L.A."/>
            <person name="Mache R."/>
            <person name="Puigdomenech P."/>
            <person name="De Simone V."/>
            <person name="Choisne N."/>
            <person name="Artiguenave F."/>
            <person name="Robert C."/>
            <person name="Brottier P."/>
            <person name="Wincker P."/>
            <person name="Cattolico L."/>
            <person name="Weissenbach J."/>
            <person name="Saurin W."/>
            <person name="Quetier F."/>
            <person name="Schaefer M."/>
            <person name="Mueller-Auer S."/>
            <person name="Gabel C."/>
            <person name="Fuchs M."/>
            <person name="Benes V."/>
            <person name="Wurmbach E."/>
            <person name="Drzonek H."/>
            <person name="Erfle H."/>
            <person name="Jordan N."/>
            <person name="Bangert S."/>
            <person name="Wiedelmann R."/>
            <person name="Kranz H."/>
            <person name="Voss H."/>
            <person name="Holland R."/>
            <person name="Brandt P."/>
            <person name="Nyakatura G."/>
            <person name="Vezzi A."/>
            <person name="D'Angelo M."/>
            <person name="Pallavicini A."/>
            <person name="Toppo S."/>
            <person name="Simionati B."/>
            <person name="Conrad A."/>
            <person name="Hornischer K."/>
            <person name="Kauer G."/>
            <person name="Loehnert T.-H."/>
            <person name="Nordsiek G."/>
            <person name="Reichelt J."/>
            <person name="Scharfe M."/>
            <person name="Schoen O."/>
            <person name="Bargues M."/>
            <person name="Terol J."/>
            <person name="Climent J."/>
            <person name="Navarro P."/>
            <person name="Collado C."/>
            <person name="Perez-Perez A."/>
            <person name="Ottenwaelder B."/>
            <person name="Duchemin D."/>
            <person name="Cooke R."/>
            <person name="Laudie M."/>
            <person name="Berger-Llauro C."/>
            <person name="Purnelle B."/>
            <person name="Masuy D."/>
            <person name="de Haan M."/>
            <person name="Maarse A.C."/>
            <person name="Alcaraz J.-P."/>
            <person name="Cottet A."/>
            <person name="Casacuberta E."/>
            <person name="Monfort A."/>
            <person name="Argiriou A."/>
            <person name="Flores M."/>
            <person name="Liguori R."/>
            <person name="Vitale D."/>
            <person name="Mannhaupt G."/>
            <person name="Haase D."/>
            <person name="Schoof H."/>
            <person name="Rudd S."/>
            <person name="Zaccaria P."/>
            <person name="Mewes H.-W."/>
            <person name="Mayer K.F.X."/>
            <person name="Kaul S."/>
            <person name="Town C.D."/>
            <person name="Koo H.L."/>
            <person name="Tallon L.J."/>
            <person name="Jenkins J."/>
            <person name="Rooney T."/>
            <person name="Rizzo M."/>
            <person name="Walts A."/>
            <person name="Utterback T."/>
            <person name="Fujii C.Y."/>
            <person name="Shea T.P."/>
            <person name="Creasy T.H."/>
            <person name="Haas B."/>
            <person name="Maiti R."/>
            <person name="Wu D."/>
            <person name="Peterson J."/>
            <person name="Van Aken S."/>
            <person name="Pai G."/>
            <person name="Militscher J."/>
            <person name="Sellers P."/>
            <person name="Gill J.E."/>
            <person name="Feldblyum T.V."/>
            <person name="Preuss D."/>
            <person name="Lin X."/>
            <person name="Nierman W.C."/>
            <person name="Salzberg S.L."/>
            <person name="White O."/>
            <person name="Venter J.C."/>
            <person name="Fraser C.M."/>
            <person name="Kaneko T."/>
            <person name="Nakamura Y."/>
            <person name="Sato S."/>
            <person name="Kato T."/>
            <person name="Asamizu E."/>
            <person name="Sasamoto S."/>
            <person name="Kimura T."/>
            <person name="Idesawa K."/>
            <person name="Kawashima K."/>
            <person name="Kishida Y."/>
            <person name="Kiyokawa C."/>
            <person name="Kohara M."/>
            <person name="Matsumoto M."/>
            <person name="Matsuno A."/>
            <person name="Muraki A."/>
            <person name="Nakayama S."/>
            <person name="Nakazaki N."/>
            <person name="Shinpo S."/>
            <person name="Takeuchi C."/>
            <person name="Wada T."/>
            <person name="Watanabe A."/>
            <person name="Yamada M."/>
            <person name="Yasuda M."/>
            <person name="Tabata S."/>
        </authorList>
    </citation>
    <scope>NUCLEOTIDE SEQUENCE [LARGE SCALE GENOMIC DNA]</scope>
    <source>
        <strain>cv. Columbia</strain>
    </source>
</reference>
<reference key="2">
    <citation type="journal article" date="2017" name="Plant J.">
        <title>Araport11: a complete reannotation of the Arabidopsis thaliana reference genome.</title>
        <authorList>
            <person name="Cheng C.Y."/>
            <person name="Krishnakumar V."/>
            <person name="Chan A.P."/>
            <person name="Thibaud-Nissen F."/>
            <person name="Schobel S."/>
            <person name="Town C.D."/>
        </authorList>
    </citation>
    <scope>GENOME REANNOTATION</scope>
    <source>
        <strain>cv. Columbia</strain>
    </source>
</reference>
<reference key="3">
    <citation type="submission" date="2004-10" db="EMBL/GenBank/DDBJ databases">
        <title>Arabidopsis cDNA clones.</title>
        <authorList>
            <person name="Shinn P."/>
            <person name="Chen H."/>
            <person name="Cheuk R."/>
            <person name="Kim C.J."/>
            <person name="Ecker J.R."/>
        </authorList>
    </citation>
    <scope>NUCLEOTIDE SEQUENCE [LARGE SCALE MRNA]</scope>
</reference>
<reference key="4">
    <citation type="submission" date="2005-03" db="EMBL/GenBank/DDBJ databases">
        <title>Arabidopsis ORF clones.</title>
        <authorList>
            <person name="Kim C.J."/>
            <person name="Chen H."/>
            <person name="Cheuk R."/>
            <person name="Shinn P."/>
            <person name="Ecker J.R."/>
        </authorList>
    </citation>
    <scope>NUCLEOTIDE SEQUENCE [LARGE SCALE MRNA]</scope>
</reference>
<reference key="5">
    <citation type="submission" date="2006-07" db="EMBL/GenBank/DDBJ databases">
        <title>Large-scale analysis of RIKEN Arabidopsis full-length (RAFL) cDNAs.</title>
        <authorList>
            <person name="Totoki Y."/>
            <person name="Seki M."/>
            <person name="Ishida J."/>
            <person name="Nakajima M."/>
            <person name="Enju A."/>
            <person name="Kamiya A."/>
            <person name="Narusaka M."/>
            <person name="Shin-i T."/>
            <person name="Nakagawa M."/>
            <person name="Sakamoto N."/>
            <person name="Oishi K."/>
            <person name="Kohara Y."/>
            <person name="Kobayashi M."/>
            <person name="Toyoda A."/>
            <person name="Sakaki Y."/>
            <person name="Sakurai T."/>
            <person name="Iida K."/>
            <person name="Akiyama K."/>
            <person name="Satou M."/>
            <person name="Toyoda T."/>
            <person name="Konagaya A."/>
            <person name="Carninci P."/>
            <person name="Kawai J."/>
            <person name="Hayashizaki Y."/>
            <person name="Shinozaki K."/>
        </authorList>
    </citation>
    <scope>NUCLEOTIDE SEQUENCE [LARGE SCALE MRNA]</scope>
    <source>
        <strain>cv. Columbia</strain>
    </source>
</reference>
<reference key="6">
    <citation type="journal article" date="2005" name="RNA">
        <title>Evolutionary conservation of minor U12-type spliceosome between plants and humans.</title>
        <authorList>
            <person name="Lorkovic Z.J."/>
            <person name="Lehner R."/>
            <person name="Forstner C."/>
            <person name="Barta A."/>
        </authorList>
    </citation>
    <scope>IDENTIFICATION</scope>
</reference>
<reference key="7">
    <citation type="journal article" date="2010" name="Plant Cell">
        <title>The Arabidopsis U12-type spliceosomal protein U11/U12-31K is involved in U12 intron splicing via RNA chaperone activity and affects plant development.</title>
        <authorList>
            <person name="Kim W.Y."/>
            <person name="Jung H.J."/>
            <person name="Kwak K.J."/>
            <person name="Kim M.K."/>
            <person name="Oh S.H."/>
            <person name="Han Y.S."/>
            <person name="Kang H."/>
        </authorList>
    </citation>
    <scope>FUNCTION</scope>
    <scope>DISRUPTION PHENOTYPE</scope>
    <scope>TISSUE SPECIFICITY</scope>
    <scope>SUBCELLULAR LOCATION</scope>
</reference>
<reference key="8">
    <citation type="journal article" date="2012" name="PLoS ONE">
        <title>The minor spliceosomal protein U11/U12-31K is an RNA chaperone crucial for U12 intron splicing and the development of dicot and monocot plants.</title>
        <authorList>
            <person name="Kwak K.J."/>
            <person name="Jung H.J."/>
            <person name="Lee K.H."/>
            <person name="Kim Y.S."/>
            <person name="Kim W.Y."/>
            <person name="Ahn S.J."/>
            <person name="Kang H."/>
        </authorList>
    </citation>
    <scope>FUNCTION</scope>
    <scope>TISSUE SPECIFICITY</scope>
</reference>
<feature type="chain" id="PRO_0000429832" description="U11/U12 small nuclear ribonucleoprotein 31 kDa protein">
    <location>
        <begin position="1"/>
        <end position="261"/>
    </location>
</feature>
<feature type="domain" description="RRM" evidence="2">
    <location>
        <begin position="57"/>
        <end position="135"/>
    </location>
</feature>
<feature type="zinc finger region" description="CCHC-type" evidence="1">
    <location>
        <begin position="153"/>
        <end position="169"/>
    </location>
</feature>
<feature type="region of interest" description="Disordered" evidence="3">
    <location>
        <begin position="18"/>
        <end position="51"/>
    </location>
</feature>
<feature type="region of interest" description="Disordered" evidence="3">
    <location>
        <begin position="165"/>
        <end position="261"/>
    </location>
</feature>
<feature type="compositionally biased region" description="Basic and acidic residues" evidence="3">
    <location>
        <begin position="226"/>
        <end position="235"/>
    </location>
</feature>
<feature type="sequence conflict" description="In Ref. 5; BAF00594." evidence="6" ref="5">
    <original>S</original>
    <variation>P</variation>
    <location>
        <position position="107"/>
    </location>
</feature>
<feature type="sequence conflict" description="In Ref. 5; BAF00594." evidence="6" ref="5">
    <original>R</original>
    <variation>L</variation>
    <location>
        <position position="138"/>
    </location>
</feature>
<proteinExistence type="evidence at transcript level"/>
<keyword id="KW-0479">Metal-binding</keyword>
<keyword id="KW-0507">mRNA processing</keyword>
<keyword id="KW-0508">mRNA splicing</keyword>
<keyword id="KW-0539">Nucleus</keyword>
<keyword id="KW-1185">Reference proteome</keyword>
<keyword id="KW-0687">Ribonucleoprotein</keyword>
<keyword id="KW-0694">RNA-binding</keyword>
<keyword id="KW-0747">Spliceosome</keyword>
<keyword id="KW-0862">Zinc</keyword>
<keyword id="KW-0863">Zinc-finger</keyword>
<organism>
    <name type="scientific">Arabidopsis thaliana</name>
    <name type="common">Mouse-ear cress</name>
    <dbReference type="NCBI Taxonomy" id="3702"/>
    <lineage>
        <taxon>Eukaryota</taxon>
        <taxon>Viridiplantae</taxon>
        <taxon>Streptophyta</taxon>
        <taxon>Embryophyta</taxon>
        <taxon>Tracheophyta</taxon>
        <taxon>Spermatophyta</taxon>
        <taxon>Magnoliopsida</taxon>
        <taxon>eudicotyledons</taxon>
        <taxon>Gunneridae</taxon>
        <taxon>Pentapetalae</taxon>
        <taxon>rosids</taxon>
        <taxon>malvids</taxon>
        <taxon>Brassicales</taxon>
        <taxon>Brassicaceae</taxon>
        <taxon>Camelineae</taxon>
        <taxon>Arabidopsis</taxon>
    </lineage>
</organism>
<comment type="function">
    <text evidence="4 5">RNA chaperone required for proper U12 intron splicing and for normal growth and development of plants. Mainly responsible for meristem activity. Plays a role in regulating cell division.</text>
</comment>
<comment type="subunit">
    <text>Component of the U11/U12 snRNPs that are part of the U12-type spliceosome.</text>
</comment>
<comment type="subcellular location">
    <subcellularLocation>
        <location evidence="4">Nucleus</location>
    </subcellularLocation>
</comment>
<comment type="tissue specificity">
    <text evidence="4 5">Ubiquitous. Abundantly expressed in the shoot apical neristem.</text>
</comment>
<comment type="disruption phenotype">
    <text evidence="4">Embryo lethal when homozygous, and defective for seed maturation when heterozygous.</text>
</comment>
<protein>
    <recommendedName>
        <fullName>U11/U12 small nuclear ribonucleoprotein 31 kDa protein</fullName>
        <shortName>U11/U12 snRNP 31 kDa protein</shortName>
        <shortName>U11/U12-31K</shortName>
    </recommendedName>
</protein>
<gene>
    <name type="primary">SNRNP31</name>
    <name type="ordered locus">At3g10400</name>
    <name type="ORF">F13M14.33</name>
</gene>
<dbReference type="EMBL" id="AC011560">
    <property type="protein sequence ID" value="AAG51392.1"/>
    <property type="molecule type" value="Genomic_DNA"/>
</dbReference>
<dbReference type="EMBL" id="CP002686">
    <property type="protein sequence ID" value="AEE74900.1"/>
    <property type="molecule type" value="Genomic_DNA"/>
</dbReference>
<dbReference type="EMBL" id="BT015938">
    <property type="protein sequence ID" value="AAV31168.1"/>
    <property type="molecule type" value="mRNA"/>
</dbReference>
<dbReference type="EMBL" id="BT021922">
    <property type="protein sequence ID" value="AAX49371.1"/>
    <property type="molecule type" value="mRNA"/>
</dbReference>
<dbReference type="EMBL" id="AK228689">
    <property type="protein sequence ID" value="BAF00594.1"/>
    <property type="molecule type" value="mRNA"/>
</dbReference>
<dbReference type="SMR" id="Q9CAE4"/>
<dbReference type="FunCoup" id="Q9CAE4">
    <property type="interactions" value="76"/>
</dbReference>
<dbReference type="STRING" id="3702.Q9CAE4"/>
<dbReference type="iPTMnet" id="Q9CAE4"/>
<dbReference type="PaxDb" id="3702-AT3G10400.1"/>
<dbReference type="ProteomicsDB" id="228535"/>
<dbReference type="EnsemblPlants" id="AT3G10400.1">
    <property type="protein sequence ID" value="AT3G10400.1"/>
    <property type="gene ID" value="AT3G10400"/>
</dbReference>
<dbReference type="Gramene" id="AT3G10400.1">
    <property type="protein sequence ID" value="AT3G10400.1"/>
    <property type="gene ID" value="AT3G10400"/>
</dbReference>
<dbReference type="KEGG" id="ath:AT3G10400"/>
<dbReference type="Araport" id="AT3G10400"/>
<dbReference type="TAIR" id="AT3G10400">
    <property type="gene designation" value="U11/U12-31K"/>
</dbReference>
<dbReference type="eggNOG" id="KOG0118">
    <property type="taxonomic scope" value="Eukaryota"/>
</dbReference>
<dbReference type="HOGENOM" id="CLU_059455_0_0_1"/>
<dbReference type="InParanoid" id="Q9CAE4"/>
<dbReference type="OMA" id="DDDNWAS"/>
<dbReference type="PhylomeDB" id="Q9CAE4"/>
<dbReference type="PRO" id="PR:Q9CAE4"/>
<dbReference type="Proteomes" id="UP000006548">
    <property type="component" value="Chromosome 3"/>
</dbReference>
<dbReference type="ExpressionAtlas" id="Q9CAE4">
    <property type="expression patterns" value="baseline and differential"/>
</dbReference>
<dbReference type="GO" id="GO:0005634">
    <property type="term" value="C:nucleus"/>
    <property type="evidence" value="ECO:0000314"/>
    <property type="project" value="TAIR"/>
</dbReference>
<dbReference type="GO" id="GO:0005689">
    <property type="term" value="C:U12-type spliceosomal complex"/>
    <property type="evidence" value="ECO:0007669"/>
    <property type="project" value="InterPro"/>
</dbReference>
<dbReference type="GO" id="GO:0003723">
    <property type="term" value="F:RNA binding"/>
    <property type="evidence" value="ECO:0007669"/>
    <property type="project" value="UniProtKB-KW"/>
</dbReference>
<dbReference type="GO" id="GO:0008270">
    <property type="term" value="F:zinc ion binding"/>
    <property type="evidence" value="ECO:0007669"/>
    <property type="project" value="UniProtKB-KW"/>
</dbReference>
<dbReference type="GO" id="GO:0032502">
    <property type="term" value="P:developmental process"/>
    <property type="evidence" value="ECO:0000315"/>
    <property type="project" value="TAIR"/>
</dbReference>
<dbReference type="GO" id="GO:0000398">
    <property type="term" value="P:mRNA splicing, via spliceosome"/>
    <property type="evidence" value="ECO:0000315"/>
    <property type="project" value="TAIR"/>
</dbReference>
<dbReference type="GO" id="GO:0051302">
    <property type="term" value="P:regulation of cell division"/>
    <property type="evidence" value="ECO:0000315"/>
    <property type="project" value="TAIR"/>
</dbReference>
<dbReference type="CDD" id="cd12393">
    <property type="entry name" value="RRM_ZCRB1"/>
    <property type="match status" value="1"/>
</dbReference>
<dbReference type="FunFam" id="3.30.70.330:FF:001144">
    <property type="entry name" value="U11/U12 small nuclear ribonucleoprotein 31 kDa protein"/>
    <property type="match status" value="1"/>
</dbReference>
<dbReference type="FunFam" id="4.10.60.10:FF:000025">
    <property type="entry name" value="U11/U12 small nuclear ribonucleoprotein 31 kDa protein-like"/>
    <property type="match status" value="1"/>
</dbReference>
<dbReference type="Gene3D" id="3.30.70.330">
    <property type="match status" value="1"/>
</dbReference>
<dbReference type="Gene3D" id="4.10.60.10">
    <property type="entry name" value="Zinc finger, CCHC-type"/>
    <property type="match status" value="1"/>
</dbReference>
<dbReference type="InterPro" id="IPR012677">
    <property type="entry name" value="Nucleotide-bd_a/b_plait_sf"/>
</dbReference>
<dbReference type="InterPro" id="IPR035979">
    <property type="entry name" value="RBD_domain_sf"/>
</dbReference>
<dbReference type="InterPro" id="IPR000504">
    <property type="entry name" value="RRM_dom"/>
</dbReference>
<dbReference type="InterPro" id="IPR044598">
    <property type="entry name" value="ZCRB1"/>
</dbReference>
<dbReference type="InterPro" id="IPR034219">
    <property type="entry name" value="ZCRB1_RRM"/>
</dbReference>
<dbReference type="InterPro" id="IPR001878">
    <property type="entry name" value="Znf_CCHC"/>
</dbReference>
<dbReference type="InterPro" id="IPR036875">
    <property type="entry name" value="Znf_CCHC_sf"/>
</dbReference>
<dbReference type="PANTHER" id="PTHR46259">
    <property type="entry name" value="ZINC FINGER CCHC-TYPE AND RNA-BINDING MOTIF-CONTAINING PROTEIN 1"/>
    <property type="match status" value="1"/>
</dbReference>
<dbReference type="PANTHER" id="PTHR46259:SF1">
    <property type="entry name" value="ZINC FINGER CCHC-TYPE AND RNA-BINDING MOTIF-CONTAINING PROTEIN 1"/>
    <property type="match status" value="1"/>
</dbReference>
<dbReference type="Pfam" id="PF00076">
    <property type="entry name" value="RRM_1"/>
    <property type="match status" value="1"/>
</dbReference>
<dbReference type="Pfam" id="PF00098">
    <property type="entry name" value="zf-CCHC"/>
    <property type="match status" value="1"/>
</dbReference>
<dbReference type="SMART" id="SM00360">
    <property type="entry name" value="RRM"/>
    <property type="match status" value="1"/>
</dbReference>
<dbReference type="SMART" id="SM00343">
    <property type="entry name" value="ZnF_C2HC"/>
    <property type="match status" value="1"/>
</dbReference>
<dbReference type="SUPFAM" id="SSF57756">
    <property type="entry name" value="Retrovirus zinc finger-like domains"/>
    <property type="match status" value="1"/>
</dbReference>
<dbReference type="SUPFAM" id="SSF54928">
    <property type="entry name" value="RNA-binding domain, RBD"/>
    <property type="match status" value="1"/>
</dbReference>
<dbReference type="PROSITE" id="PS50102">
    <property type="entry name" value="RRM"/>
    <property type="match status" value="1"/>
</dbReference>
<dbReference type="PROSITE" id="PS50158">
    <property type="entry name" value="ZF_CCHC"/>
    <property type="match status" value="1"/>
</dbReference>
<evidence type="ECO:0000255" key="1">
    <source>
        <dbReference type="PROSITE-ProRule" id="PRU00047"/>
    </source>
</evidence>
<evidence type="ECO:0000255" key="2">
    <source>
        <dbReference type="PROSITE-ProRule" id="PRU00176"/>
    </source>
</evidence>
<evidence type="ECO:0000256" key="3">
    <source>
        <dbReference type="SAM" id="MobiDB-lite"/>
    </source>
</evidence>
<evidence type="ECO:0000269" key="4">
    <source>
    </source>
</evidence>
<evidence type="ECO:0000269" key="5">
    <source>
    </source>
</evidence>
<evidence type="ECO:0000305" key="6"/>
<sequence>MKKRKIHHSDDEEDDTFYYRYSSVAAPPPSNPKHQPSSSAKSSAPGGGSGGLAPSKSTLYVSNLDFSLTNSDIHTLFSTFGKVARVTVLKDRHTRQSRGVAFVLYVSREDAAKAARSMDAKILNGRKLTVSIAADNGRASEFIKKRVYKDKSRCYECGDEGHLSYECPKNQLGPRERPPPPKKRGRRKEEEGEAEEISWSAAAPSLAVAEEEFEEENWASVVDNEAGERLRKREAEEEEERRMKRKEKKVSYFSDESDDED</sequence>